<keyword id="KW-0004">4Fe-4S</keyword>
<keyword id="KW-0963">Cytoplasm</keyword>
<keyword id="KW-0408">Iron</keyword>
<keyword id="KW-0411">Iron-sulfur</keyword>
<keyword id="KW-0479">Metal-binding</keyword>
<keyword id="KW-1185">Reference proteome</keyword>
<keyword id="KW-0949">S-adenosyl-L-methionine</keyword>
<keyword id="KW-0808">Transferase</keyword>
<gene>
    <name evidence="1" type="primary">rimO</name>
    <name type="ordered locus">HD_1896</name>
</gene>
<protein>
    <recommendedName>
        <fullName evidence="1">Ribosomal protein uS12 methylthiotransferase RimO</fullName>
        <shortName evidence="1">uS12 MTTase</shortName>
        <shortName evidence="1">uS12 methylthiotransferase</shortName>
        <ecNumber evidence="1">2.8.4.4</ecNumber>
    </recommendedName>
    <alternativeName>
        <fullName evidence="1">Ribosomal protein uS12 (aspartate-C(3))-methylthiotransferase</fullName>
    </alternativeName>
    <alternativeName>
        <fullName evidence="1">Ribosome maturation factor RimO</fullName>
    </alternativeName>
</protein>
<name>RIMO_HAEDU</name>
<evidence type="ECO:0000255" key="1">
    <source>
        <dbReference type="HAMAP-Rule" id="MF_01865"/>
    </source>
</evidence>
<evidence type="ECO:0000255" key="2">
    <source>
        <dbReference type="PROSITE-ProRule" id="PRU01266"/>
    </source>
</evidence>
<reference key="1">
    <citation type="submission" date="2003-06" db="EMBL/GenBank/DDBJ databases">
        <title>The complete genome sequence of Haemophilus ducreyi.</title>
        <authorList>
            <person name="Munson R.S. Jr."/>
            <person name="Ray W.C."/>
            <person name="Mahairas G."/>
            <person name="Sabo P."/>
            <person name="Mungur R."/>
            <person name="Johnson L."/>
            <person name="Nguyen D."/>
            <person name="Wang J."/>
            <person name="Forst C."/>
            <person name="Hood L."/>
        </authorList>
    </citation>
    <scope>NUCLEOTIDE SEQUENCE [LARGE SCALE GENOMIC DNA]</scope>
    <source>
        <strain>35000HP / ATCC 700724</strain>
    </source>
</reference>
<proteinExistence type="inferred from homology"/>
<sequence>MRDVPNIGFISLGCPKNLVDSERILTELRSDGYNIIPSYENADLVIVNTCGFIDSAVQESLEAVGEALKENGKVIVTGCLGAKENQIREVHPKVLEITGPHSYEAVMQHVHKYVPRPERNMYTSLVPAQGVKLTPKHYAYLKISEGCDHRCTFCIIPSMRGDLDSRPIVQILDEAKRLADSGVKELLIVSQDTSAYALDQTKENQNKTVFWNGVPIKNNLISLCEQLATLGIWIRLHYVYPYPHVDNLIPLMAEGKILPYLDIPLQHASPKILKAMKRPGSIDRTLERIKQWREICPELTLRSTFIVGFPGETEEDFQMLLDFLTEAQLDRVGCFKFSPVDGAVATEMAEQVPEEVKEERFHRFMQVQQRISVARLQQKIGKTLAIIIDEIDEYGIIGRSMADAPEIDGVVYVDNISQQAVTVGQIILVTITNADEYDLWGTY</sequence>
<comment type="function">
    <text evidence="1">Catalyzes the methylthiolation of an aspartic acid residue of ribosomal protein uS12.</text>
</comment>
<comment type="catalytic activity">
    <reaction evidence="1">
        <text>L-aspartate(89)-[ribosomal protein uS12]-hydrogen + (sulfur carrier)-SH + AH2 + 2 S-adenosyl-L-methionine = 3-methylsulfanyl-L-aspartate(89)-[ribosomal protein uS12]-hydrogen + (sulfur carrier)-H + 5'-deoxyadenosine + L-methionine + A + S-adenosyl-L-homocysteine + 2 H(+)</text>
        <dbReference type="Rhea" id="RHEA:37087"/>
        <dbReference type="Rhea" id="RHEA-COMP:10460"/>
        <dbReference type="Rhea" id="RHEA-COMP:10461"/>
        <dbReference type="Rhea" id="RHEA-COMP:14737"/>
        <dbReference type="Rhea" id="RHEA-COMP:14739"/>
        <dbReference type="ChEBI" id="CHEBI:13193"/>
        <dbReference type="ChEBI" id="CHEBI:15378"/>
        <dbReference type="ChEBI" id="CHEBI:17319"/>
        <dbReference type="ChEBI" id="CHEBI:17499"/>
        <dbReference type="ChEBI" id="CHEBI:29917"/>
        <dbReference type="ChEBI" id="CHEBI:29961"/>
        <dbReference type="ChEBI" id="CHEBI:57844"/>
        <dbReference type="ChEBI" id="CHEBI:57856"/>
        <dbReference type="ChEBI" id="CHEBI:59789"/>
        <dbReference type="ChEBI" id="CHEBI:64428"/>
        <dbReference type="ChEBI" id="CHEBI:73599"/>
        <dbReference type="EC" id="2.8.4.4"/>
    </reaction>
</comment>
<comment type="cofactor">
    <cofactor evidence="1">
        <name>[4Fe-4S] cluster</name>
        <dbReference type="ChEBI" id="CHEBI:49883"/>
    </cofactor>
    <text evidence="1">Binds 2 [4Fe-4S] clusters. One cluster is coordinated with 3 cysteines and an exchangeable S-adenosyl-L-methionine.</text>
</comment>
<comment type="subcellular location">
    <subcellularLocation>
        <location evidence="1">Cytoplasm</location>
    </subcellularLocation>
</comment>
<comment type="similarity">
    <text evidence="1">Belongs to the methylthiotransferase family. RimO subfamily.</text>
</comment>
<accession>Q7VKK2</accession>
<dbReference type="EC" id="2.8.4.4" evidence="1"/>
<dbReference type="EMBL" id="AE017143">
    <property type="protein sequence ID" value="AAP96625.1"/>
    <property type="molecule type" value="Genomic_DNA"/>
</dbReference>
<dbReference type="RefSeq" id="WP_010945653.1">
    <property type="nucleotide sequence ID" value="NC_002940.2"/>
</dbReference>
<dbReference type="SMR" id="Q7VKK2"/>
<dbReference type="STRING" id="233412.HD_1896"/>
<dbReference type="KEGG" id="hdu:HD_1896"/>
<dbReference type="eggNOG" id="COG0621">
    <property type="taxonomic scope" value="Bacteria"/>
</dbReference>
<dbReference type="HOGENOM" id="CLU_018697_0_0_6"/>
<dbReference type="OrthoDB" id="9805215at2"/>
<dbReference type="Proteomes" id="UP000001022">
    <property type="component" value="Chromosome"/>
</dbReference>
<dbReference type="GO" id="GO:0005829">
    <property type="term" value="C:cytosol"/>
    <property type="evidence" value="ECO:0007669"/>
    <property type="project" value="TreeGrafter"/>
</dbReference>
<dbReference type="GO" id="GO:0051539">
    <property type="term" value="F:4 iron, 4 sulfur cluster binding"/>
    <property type="evidence" value="ECO:0007669"/>
    <property type="project" value="UniProtKB-UniRule"/>
</dbReference>
<dbReference type="GO" id="GO:0035599">
    <property type="term" value="F:aspartic acid methylthiotransferase activity"/>
    <property type="evidence" value="ECO:0007669"/>
    <property type="project" value="TreeGrafter"/>
</dbReference>
<dbReference type="GO" id="GO:0046872">
    <property type="term" value="F:metal ion binding"/>
    <property type="evidence" value="ECO:0007669"/>
    <property type="project" value="UniProtKB-KW"/>
</dbReference>
<dbReference type="GO" id="GO:0103039">
    <property type="term" value="F:protein methylthiotransferase activity"/>
    <property type="evidence" value="ECO:0007669"/>
    <property type="project" value="UniProtKB-EC"/>
</dbReference>
<dbReference type="GO" id="GO:0006400">
    <property type="term" value="P:tRNA modification"/>
    <property type="evidence" value="ECO:0007669"/>
    <property type="project" value="InterPro"/>
</dbReference>
<dbReference type="CDD" id="cd01335">
    <property type="entry name" value="Radical_SAM"/>
    <property type="match status" value="1"/>
</dbReference>
<dbReference type="FunFam" id="3.40.50.12160:FF:000002">
    <property type="entry name" value="Ribosomal protein S12 methylthiotransferase RimO"/>
    <property type="match status" value="1"/>
</dbReference>
<dbReference type="FunFam" id="3.80.30.20:FF:000001">
    <property type="entry name" value="tRNA-2-methylthio-N(6)-dimethylallyladenosine synthase 2"/>
    <property type="match status" value="1"/>
</dbReference>
<dbReference type="Gene3D" id="3.40.50.12160">
    <property type="entry name" value="Methylthiotransferase, N-terminal domain"/>
    <property type="match status" value="1"/>
</dbReference>
<dbReference type="Gene3D" id="2.40.50.140">
    <property type="entry name" value="Nucleic acid-binding proteins"/>
    <property type="match status" value="1"/>
</dbReference>
<dbReference type="Gene3D" id="3.80.30.20">
    <property type="entry name" value="tm_1862 like domain"/>
    <property type="match status" value="1"/>
</dbReference>
<dbReference type="HAMAP" id="MF_01865">
    <property type="entry name" value="MTTase_RimO"/>
    <property type="match status" value="1"/>
</dbReference>
<dbReference type="InterPro" id="IPR006638">
    <property type="entry name" value="Elp3/MiaA/NifB-like_rSAM"/>
</dbReference>
<dbReference type="InterPro" id="IPR005839">
    <property type="entry name" value="Methylthiotransferase"/>
</dbReference>
<dbReference type="InterPro" id="IPR020612">
    <property type="entry name" value="Methylthiotransferase_CS"/>
</dbReference>
<dbReference type="InterPro" id="IPR013848">
    <property type="entry name" value="Methylthiotransferase_N"/>
</dbReference>
<dbReference type="InterPro" id="IPR038135">
    <property type="entry name" value="Methylthiotransferase_N_sf"/>
</dbReference>
<dbReference type="InterPro" id="IPR012340">
    <property type="entry name" value="NA-bd_OB-fold"/>
</dbReference>
<dbReference type="InterPro" id="IPR005840">
    <property type="entry name" value="Ribosomal_uS12_MeSTrfase_RimO"/>
</dbReference>
<dbReference type="InterPro" id="IPR007197">
    <property type="entry name" value="rSAM"/>
</dbReference>
<dbReference type="InterPro" id="IPR023404">
    <property type="entry name" value="rSAM_horseshoe"/>
</dbReference>
<dbReference type="InterPro" id="IPR002792">
    <property type="entry name" value="TRAM_dom"/>
</dbReference>
<dbReference type="NCBIfam" id="TIGR01125">
    <property type="entry name" value="30S ribosomal protein S12 methylthiotransferase RimO"/>
    <property type="match status" value="1"/>
</dbReference>
<dbReference type="NCBIfam" id="TIGR00089">
    <property type="entry name" value="MiaB/RimO family radical SAM methylthiotransferase"/>
    <property type="match status" value="1"/>
</dbReference>
<dbReference type="PANTHER" id="PTHR43837">
    <property type="entry name" value="RIBOSOMAL PROTEIN S12 METHYLTHIOTRANSFERASE RIMO"/>
    <property type="match status" value="1"/>
</dbReference>
<dbReference type="PANTHER" id="PTHR43837:SF1">
    <property type="entry name" value="RIBOSOMAL PROTEIN US12 METHYLTHIOTRANSFERASE RIMO"/>
    <property type="match status" value="1"/>
</dbReference>
<dbReference type="Pfam" id="PF04055">
    <property type="entry name" value="Radical_SAM"/>
    <property type="match status" value="1"/>
</dbReference>
<dbReference type="Pfam" id="PF18693">
    <property type="entry name" value="TRAM_2"/>
    <property type="match status" value="1"/>
</dbReference>
<dbReference type="Pfam" id="PF00919">
    <property type="entry name" value="UPF0004"/>
    <property type="match status" value="1"/>
</dbReference>
<dbReference type="SFLD" id="SFLDG01082">
    <property type="entry name" value="B12-binding_domain_containing"/>
    <property type="match status" value="1"/>
</dbReference>
<dbReference type="SFLD" id="SFLDG01061">
    <property type="entry name" value="methylthiotransferase"/>
    <property type="match status" value="1"/>
</dbReference>
<dbReference type="SFLD" id="SFLDF00274">
    <property type="entry name" value="ribosomal_protein_S12_methylth"/>
    <property type="match status" value="1"/>
</dbReference>
<dbReference type="SMART" id="SM00729">
    <property type="entry name" value="Elp3"/>
    <property type="match status" value="1"/>
</dbReference>
<dbReference type="SUPFAM" id="SSF102114">
    <property type="entry name" value="Radical SAM enzymes"/>
    <property type="match status" value="1"/>
</dbReference>
<dbReference type="PROSITE" id="PS51449">
    <property type="entry name" value="MTTASE_N"/>
    <property type="match status" value="1"/>
</dbReference>
<dbReference type="PROSITE" id="PS01278">
    <property type="entry name" value="MTTASE_RADICAL"/>
    <property type="match status" value="1"/>
</dbReference>
<dbReference type="PROSITE" id="PS51918">
    <property type="entry name" value="RADICAL_SAM"/>
    <property type="match status" value="1"/>
</dbReference>
<dbReference type="PROSITE" id="PS50926">
    <property type="entry name" value="TRAM"/>
    <property type="match status" value="1"/>
</dbReference>
<organism>
    <name type="scientific">Haemophilus ducreyi (strain 35000HP / ATCC 700724)</name>
    <dbReference type="NCBI Taxonomy" id="233412"/>
    <lineage>
        <taxon>Bacteria</taxon>
        <taxon>Pseudomonadati</taxon>
        <taxon>Pseudomonadota</taxon>
        <taxon>Gammaproteobacteria</taxon>
        <taxon>Pasteurellales</taxon>
        <taxon>Pasteurellaceae</taxon>
        <taxon>Haemophilus</taxon>
    </lineage>
</organism>
<feature type="chain" id="PRO_0000374850" description="Ribosomal protein uS12 methylthiotransferase RimO">
    <location>
        <begin position="1"/>
        <end position="443"/>
    </location>
</feature>
<feature type="domain" description="MTTase N-terminal" evidence="1">
    <location>
        <begin position="5"/>
        <end position="115"/>
    </location>
</feature>
<feature type="domain" description="Radical SAM core" evidence="2">
    <location>
        <begin position="133"/>
        <end position="374"/>
    </location>
</feature>
<feature type="domain" description="TRAM" evidence="1">
    <location>
        <begin position="377"/>
        <end position="443"/>
    </location>
</feature>
<feature type="binding site" evidence="1">
    <location>
        <position position="14"/>
    </location>
    <ligand>
        <name>[4Fe-4S] cluster</name>
        <dbReference type="ChEBI" id="CHEBI:49883"/>
        <label>1</label>
    </ligand>
</feature>
<feature type="binding site" evidence="1">
    <location>
        <position position="50"/>
    </location>
    <ligand>
        <name>[4Fe-4S] cluster</name>
        <dbReference type="ChEBI" id="CHEBI:49883"/>
        <label>1</label>
    </ligand>
</feature>
<feature type="binding site" evidence="1">
    <location>
        <position position="79"/>
    </location>
    <ligand>
        <name>[4Fe-4S] cluster</name>
        <dbReference type="ChEBI" id="CHEBI:49883"/>
        <label>1</label>
    </ligand>
</feature>
<feature type="binding site" evidence="1">
    <location>
        <position position="147"/>
    </location>
    <ligand>
        <name>[4Fe-4S] cluster</name>
        <dbReference type="ChEBI" id="CHEBI:49883"/>
        <label>2</label>
        <note>4Fe-4S-S-AdoMet</note>
    </ligand>
</feature>
<feature type="binding site" evidence="1">
    <location>
        <position position="151"/>
    </location>
    <ligand>
        <name>[4Fe-4S] cluster</name>
        <dbReference type="ChEBI" id="CHEBI:49883"/>
        <label>2</label>
        <note>4Fe-4S-S-AdoMet</note>
    </ligand>
</feature>
<feature type="binding site" evidence="1">
    <location>
        <position position="154"/>
    </location>
    <ligand>
        <name>[4Fe-4S] cluster</name>
        <dbReference type="ChEBI" id="CHEBI:49883"/>
        <label>2</label>
        <note>4Fe-4S-S-AdoMet</note>
    </ligand>
</feature>